<sequence length="326" mass="36929">MRKLLIPSIVLIIAALLMSMFVIPEGERGIVIRFGRVLKDNNDLARIYEPGLHFKMPLFDRVKTLDARIQTMDGRSDRFVTSEKKDVIIDTYVKWRIEDFGQYYLATGGGNALTAEALLERKVTDVLRSEIGAREIKQIVSGPRNVAVLPENADSSELTTEAAKEAMEIDGQRDQIMSEVLNDTRESAMKDLGVYVVDFRMKKINLPDEISESIYRRMRAERESVARKHRSQGREKAEVIRAQAELEVATILAEADKTARVTRGTADAEAAKIYSDAYKKDPEFFSFLRSLRAYEKSFNSKNDILVLDPNSEFFQYMNNAKGAAAK</sequence>
<name>HFLC_VIBCH</name>
<proteinExistence type="inferred from homology"/>
<keyword id="KW-0472">Membrane</keyword>
<keyword id="KW-1185">Reference proteome</keyword>
<keyword id="KW-0812">Transmembrane</keyword>
<keyword id="KW-1133">Transmembrane helix</keyword>
<dbReference type="EMBL" id="AE003852">
    <property type="protein sequence ID" value="AAF93523.1"/>
    <property type="molecule type" value="Genomic_DNA"/>
</dbReference>
<dbReference type="PIR" id="F82334">
    <property type="entry name" value="F82334"/>
</dbReference>
<dbReference type="RefSeq" id="NP_230004.1">
    <property type="nucleotide sequence ID" value="NC_002505.1"/>
</dbReference>
<dbReference type="RefSeq" id="WP_001228766.1">
    <property type="nucleotide sequence ID" value="NZ_LT906614.1"/>
</dbReference>
<dbReference type="SMR" id="Q9KV08"/>
<dbReference type="STRING" id="243277.VC_0350"/>
<dbReference type="MEROPS" id="I87.001"/>
<dbReference type="DNASU" id="2615063"/>
<dbReference type="EnsemblBacteria" id="AAF93523">
    <property type="protein sequence ID" value="AAF93523"/>
    <property type="gene ID" value="VC_0350"/>
</dbReference>
<dbReference type="GeneID" id="69720906"/>
<dbReference type="KEGG" id="vch:VC_0350"/>
<dbReference type="PATRIC" id="fig|243277.26.peg.327"/>
<dbReference type="eggNOG" id="COG0330">
    <property type="taxonomic scope" value="Bacteria"/>
</dbReference>
<dbReference type="HOGENOM" id="CLU_059167_3_0_6"/>
<dbReference type="Proteomes" id="UP000000584">
    <property type="component" value="Chromosome 1"/>
</dbReference>
<dbReference type="GO" id="GO:0016020">
    <property type="term" value="C:membrane"/>
    <property type="evidence" value="ECO:0007669"/>
    <property type="project" value="UniProtKB-SubCell"/>
</dbReference>
<dbReference type="CDD" id="cd03405">
    <property type="entry name" value="SPFH_HflC"/>
    <property type="match status" value="1"/>
</dbReference>
<dbReference type="Gene3D" id="3.30.479.30">
    <property type="entry name" value="Band 7 domain"/>
    <property type="match status" value="1"/>
</dbReference>
<dbReference type="InterPro" id="IPR001107">
    <property type="entry name" value="Band_7"/>
</dbReference>
<dbReference type="InterPro" id="IPR036013">
    <property type="entry name" value="Band_7/SPFH_dom_sf"/>
</dbReference>
<dbReference type="InterPro" id="IPR010200">
    <property type="entry name" value="HflC"/>
</dbReference>
<dbReference type="NCBIfam" id="TIGR01932">
    <property type="entry name" value="hflC"/>
    <property type="match status" value="1"/>
</dbReference>
<dbReference type="PANTHER" id="PTHR42911">
    <property type="entry name" value="MODULATOR OF FTSH PROTEASE HFLC"/>
    <property type="match status" value="1"/>
</dbReference>
<dbReference type="PANTHER" id="PTHR42911:SF1">
    <property type="entry name" value="MODULATOR OF FTSH PROTEASE HFLC"/>
    <property type="match status" value="1"/>
</dbReference>
<dbReference type="Pfam" id="PF01145">
    <property type="entry name" value="Band_7"/>
    <property type="match status" value="1"/>
</dbReference>
<dbReference type="PIRSF" id="PIRSF005651">
    <property type="entry name" value="HflC"/>
    <property type="match status" value="1"/>
</dbReference>
<dbReference type="SMART" id="SM00244">
    <property type="entry name" value="PHB"/>
    <property type="match status" value="1"/>
</dbReference>
<dbReference type="SUPFAM" id="SSF117892">
    <property type="entry name" value="Band 7/SPFH domain"/>
    <property type="match status" value="1"/>
</dbReference>
<accession>Q9KV08</accession>
<feature type="chain" id="PRO_0000094079" description="Protein HflC">
    <location>
        <begin position="1"/>
        <end position="326"/>
    </location>
</feature>
<feature type="transmembrane region" description="Helical" evidence="2">
    <location>
        <begin position="4"/>
        <end position="24"/>
    </location>
</feature>
<protein>
    <recommendedName>
        <fullName>Protein HflC</fullName>
    </recommendedName>
</protein>
<reference key="1">
    <citation type="journal article" date="2000" name="Nature">
        <title>DNA sequence of both chromosomes of the cholera pathogen Vibrio cholerae.</title>
        <authorList>
            <person name="Heidelberg J.F."/>
            <person name="Eisen J.A."/>
            <person name="Nelson W.C."/>
            <person name="Clayton R.A."/>
            <person name="Gwinn M.L."/>
            <person name="Dodson R.J."/>
            <person name="Haft D.H."/>
            <person name="Hickey E.K."/>
            <person name="Peterson J.D."/>
            <person name="Umayam L.A."/>
            <person name="Gill S.R."/>
            <person name="Nelson K.E."/>
            <person name="Read T.D."/>
            <person name="Tettelin H."/>
            <person name="Richardson D.L."/>
            <person name="Ermolaeva M.D."/>
            <person name="Vamathevan J.J."/>
            <person name="Bass S."/>
            <person name="Qin H."/>
            <person name="Dragoi I."/>
            <person name="Sellers P."/>
            <person name="McDonald L.A."/>
            <person name="Utterback T.R."/>
            <person name="Fleischmann R.D."/>
            <person name="Nierman W.C."/>
            <person name="White O."/>
            <person name="Salzberg S.L."/>
            <person name="Smith H.O."/>
            <person name="Colwell R.R."/>
            <person name="Mekalanos J.J."/>
            <person name="Venter J.C."/>
            <person name="Fraser C.M."/>
        </authorList>
    </citation>
    <scope>NUCLEOTIDE SEQUENCE [LARGE SCALE GENOMIC DNA]</scope>
    <source>
        <strain>ATCC 39315 / El Tor Inaba N16961</strain>
    </source>
</reference>
<gene>
    <name type="primary">hflC</name>
    <name type="ordered locus">VC_0350</name>
</gene>
<evidence type="ECO:0000250" key="1"/>
<evidence type="ECO:0000255" key="2"/>
<evidence type="ECO:0000305" key="3"/>
<comment type="function">
    <text evidence="1">HflC and HflK could regulate a protease.</text>
</comment>
<comment type="subunit">
    <text evidence="1">HflC and HflK may interact to form a multimeric complex.</text>
</comment>
<comment type="subcellular location">
    <subcellularLocation>
        <location evidence="3">Membrane</location>
        <topology evidence="3">Single-pass membrane protein</topology>
    </subcellularLocation>
</comment>
<comment type="similarity">
    <text evidence="3">Belongs to the band 7/mec-2 family. HflC subfamily.</text>
</comment>
<organism>
    <name type="scientific">Vibrio cholerae serotype O1 (strain ATCC 39315 / El Tor Inaba N16961)</name>
    <dbReference type="NCBI Taxonomy" id="243277"/>
    <lineage>
        <taxon>Bacteria</taxon>
        <taxon>Pseudomonadati</taxon>
        <taxon>Pseudomonadota</taxon>
        <taxon>Gammaproteobacteria</taxon>
        <taxon>Vibrionales</taxon>
        <taxon>Vibrionaceae</taxon>
        <taxon>Vibrio</taxon>
    </lineage>
</organism>